<name>PYRF_BRUC2</name>
<sequence>MTTELHDDASGRLIVGLDVPTIAEAEKVVEELGNAVSFYKIGYQLVFAGGLDFAKSLVAARKKVFLDMKLLDIDNTIAKGVENVAKMGVSMLTLHAYPKAMRAAVEAARGSDLCLLGVTVLTSMDNADLREAGYSDNAETLVLKRARQAHEAGMGGIVASAVEAQAIRQAVGPDMAIVTPGIRPAGSEKGDQKRVMTPADALRAGASHLVVARPIVGAPDRKAAALAILKEMRSIGRS</sequence>
<reference key="1">
    <citation type="submission" date="2007-10" db="EMBL/GenBank/DDBJ databases">
        <title>Brucella canis ATCC 23365 whole genome shotgun sequencing project.</title>
        <authorList>
            <person name="Setubal J.C."/>
            <person name="Bowns C."/>
            <person name="Boyle S."/>
            <person name="Crasta O.R."/>
            <person name="Czar M.J."/>
            <person name="Dharmanolla C."/>
            <person name="Gillespie J.J."/>
            <person name="Kenyon R.W."/>
            <person name="Lu J."/>
            <person name="Mane S."/>
            <person name="Mohapatra S."/>
            <person name="Nagrani S."/>
            <person name="Purkayastha A."/>
            <person name="Rajasimha H.K."/>
            <person name="Shallom J.M."/>
            <person name="Shallom S."/>
            <person name="Shukla M."/>
            <person name="Snyder E.E."/>
            <person name="Sobral B.W."/>
            <person name="Wattam A.R."/>
            <person name="Will R."/>
            <person name="Williams K."/>
            <person name="Yoo H."/>
            <person name="Bruce D."/>
            <person name="Detter C."/>
            <person name="Munk C."/>
            <person name="Brettin T.S."/>
        </authorList>
    </citation>
    <scope>NUCLEOTIDE SEQUENCE [LARGE SCALE GENOMIC DNA]</scope>
    <source>
        <strain>ATCC 23365 / NCTC 10854 / RM-666</strain>
    </source>
</reference>
<dbReference type="EC" id="4.1.1.23" evidence="1"/>
<dbReference type="EMBL" id="CP000872">
    <property type="protein sequence ID" value="ABX63156.1"/>
    <property type="molecule type" value="Genomic_DNA"/>
</dbReference>
<dbReference type="RefSeq" id="WP_004689341.1">
    <property type="nucleotide sequence ID" value="NC_010103.1"/>
</dbReference>
<dbReference type="SMR" id="A9M9W1"/>
<dbReference type="GeneID" id="97534614"/>
<dbReference type="KEGG" id="bcs:BCAN_A2173"/>
<dbReference type="HOGENOM" id="CLU_067069_1_0_5"/>
<dbReference type="PhylomeDB" id="A9M9W1"/>
<dbReference type="UniPathway" id="UPA00070">
    <property type="reaction ID" value="UER00120"/>
</dbReference>
<dbReference type="Proteomes" id="UP000001385">
    <property type="component" value="Chromosome I"/>
</dbReference>
<dbReference type="GO" id="GO:0005829">
    <property type="term" value="C:cytosol"/>
    <property type="evidence" value="ECO:0007669"/>
    <property type="project" value="TreeGrafter"/>
</dbReference>
<dbReference type="GO" id="GO:0004590">
    <property type="term" value="F:orotidine-5'-phosphate decarboxylase activity"/>
    <property type="evidence" value="ECO:0007669"/>
    <property type="project" value="UniProtKB-UniRule"/>
</dbReference>
<dbReference type="GO" id="GO:0006207">
    <property type="term" value="P:'de novo' pyrimidine nucleobase biosynthetic process"/>
    <property type="evidence" value="ECO:0007669"/>
    <property type="project" value="InterPro"/>
</dbReference>
<dbReference type="GO" id="GO:0044205">
    <property type="term" value="P:'de novo' UMP biosynthetic process"/>
    <property type="evidence" value="ECO:0007669"/>
    <property type="project" value="UniProtKB-UniRule"/>
</dbReference>
<dbReference type="CDD" id="cd04725">
    <property type="entry name" value="OMP_decarboxylase_like"/>
    <property type="match status" value="1"/>
</dbReference>
<dbReference type="Gene3D" id="3.20.20.70">
    <property type="entry name" value="Aldolase class I"/>
    <property type="match status" value="1"/>
</dbReference>
<dbReference type="HAMAP" id="MF_01200_B">
    <property type="entry name" value="OMPdecase_type1_B"/>
    <property type="match status" value="1"/>
</dbReference>
<dbReference type="InterPro" id="IPR013785">
    <property type="entry name" value="Aldolase_TIM"/>
</dbReference>
<dbReference type="InterPro" id="IPR014732">
    <property type="entry name" value="OMPdecase"/>
</dbReference>
<dbReference type="InterPro" id="IPR018089">
    <property type="entry name" value="OMPdecase_AS"/>
</dbReference>
<dbReference type="InterPro" id="IPR047596">
    <property type="entry name" value="OMPdecase_bac"/>
</dbReference>
<dbReference type="InterPro" id="IPR001754">
    <property type="entry name" value="OMPdeCOase_dom"/>
</dbReference>
<dbReference type="InterPro" id="IPR011060">
    <property type="entry name" value="RibuloseP-bd_barrel"/>
</dbReference>
<dbReference type="NCBIfam" id="NF001273">
    <property type="entry name" value="PRK00230.1"/>
    <property type="match status" value="1"/>
</dbReference>
<dbReference type="NCBIfam" id="TIGR01740">
    <property type="entry name" value="pyrF"/>
    <property type="match status" value="1"/>
</dbReference>
<dbReference type="PANTHER" id="PTHR32119">
    <property type="entry name" value="OROTIDINE 5'-PHOSPHATE DECARBOXYLASE"/>
    <property type="match status" value="1"/>
</dbReference>
<dbReference type="PANTHER" id="PTHR32119:SF2">
    <property type="entry name" value="OROTIDINE 5'-PHOSPHATE DECARBOXYLASE"/>
    <property type="match status" value="1"/>
</dbReference>
<dbReference type="Pfam" id="PF00215">
    <property type="entry name" value="OMPdecase"/>
    <property type="match status" value="1"/>
</dbReference>
<dbReference type="SMART" id="SM00934">
    <property type="entry name" value="OMPdecase"/>
    <property type="match status" value="1"/>
</dbReference>
<dbReference type="SUPFAM" id="SSF51366">
    <property type="entry name" value="Ribulose-phoshate binding barrel"/>
    <property type="match status" value="1"/>
</dbReference>
<dbReference type="PROSITE" id="PS00156">
    <property type="entry name" value="OMPDECASE"/>
    <property type="match status" value="1"/>
</dbReference>
<keyword id="KW-0210">Decarboxylase</keyword>
<keyword id="KW-0456">Lyase</keyword>
<keyword id="KW-0665">Pyrimidine biosynthesis</keyword>
<keyword id="KW-1185">Reference proteome</keyword>
<protein>
    <recommendedName>
        <fullName evidence="1">Orotidine 5'-phosphate decarboxylase</fullName>
        <ecNumber evidence="1">4.1.1.23</ecNumber>
    </recommendedName>
    <alternativeName>
        <fullName evidence="1">OMP decarboxylase</fullName>
        <shortName evidence="1">OMPDCase</shortName>
        <shortName evidence="1">OMPdecase</shortName>
    </alternativeName>
</protein>
<evidence type="ECO:0000255" key="1">
    <source>
        <dbReference type="HAMAP-Rule" id="MF_01200"/>
    </source>
</evidence>
<proteinExistence type="inferred from homology"/>
<organism>
    <name type="scientific">Brucella canis (strain ATCC 23365 / NCTC 10854 / RM-666)</name>
    <dbReference type="NCBI Taxonomy" id="483179"/>
    <lineage>
        <taxon>Bacteria</taxon>
        <taxon>Pseudomonadati</taxon>
        <taxon>Pseudomonadota</taxon>
        <taxon>Alphaproteobacteria</taxon>
        <taxon>Hyphomicrobiales</taxon>
        <taxon>Brucellaceae</taxon>
        <taxon>Brucella/Ochrobactrum group</taxon>
        <taxon>Brucella</taxon>
    </lineage>
</organism>
<accession>A9M9W1</accession>
<feature type="chain" id="PRO_1000085485" description="Orotidine 5'-phosphate decarboxylase">
    <location>
        <begin position="1"/>
        <end position="238"/>
    </location>
</feature>
<feature type="active site" description="Proton donor" evidence="1">
    <location>
        <position position="69"/>
    </location>
</feature>
<feature type="binding site" evidence="1">
    <location>
        <position position="18"/>
    </location>
    <ligand>
        <name>substrate</name>
    </ligand>
</feature>
<feature type="binding site" evidence="1">
    <location>
        <position position="40"/>
    </location>
    <ligand>
        <name>substrate</name>
    </ligand>
</feature>
<feature type="binding site" evidence="1">
    <location>
        <begin position="67"/>
        <end position="76"/>
    </location>
    <ligand>
        <name>substrate</name>
    </ligand>
</feature>
<feature type="binding site" evidence="1">
    <location>
        <position position="122"/>
    </location>
    <ligand>
        <name>substrate</name>
    </ligand>
</feature>
<feature type="binding site" evidence="1">
    <location>
        <position position="183"/>
    </location>
    <ligand>
        <name>substrate</name>
    </ligand>
</feature>
<feature type="binding site" evidence="1">
    <location>
        <position position="192"/>
    </location>
    <ligand>
        <name>substrate</name>
    </ligand>
</feature>
<feature type="binding site" evidence="1">
    <location>
        <position position="213"/>
    </location>
    <ligand>
        <name>substrate</name>
    </ligand>
</feature>
<comment type="function">
    <text evidence="1">Catalyzes the decarboxylation of orotidine 5'-monophosphate (OMP) to uridine 5'-monophosphate (UMP).</text>
</comment>
<comment type="catalytic activity">
    <reaction evidence="1">
        <text>orotidine 5'-phosphate + H(+) = UMP + CO2</text>
        <dbReference type="Rhea" id="RHEA:11596"/>
        <dbReference type="ChEBI" id="CHEBI:15378"/>
        <dbReference type="ChEBI" id="CHEBI:16526"/>
        <dbReference type="ChEBI" id="CHEBI:57538"/>
        <dbReference type="ChEBI" id="CHEBI:57865"/>
        <dbReference type="EC" id="4.1.1.23"/>
    </reaction>
</comment>
<comment type="pathway">
    <text evidence="1">Pyrimidine metabolism; UMP biosynthesis via de novo pathway; UMP from orotate: step 2/2.</text>
</comment>
<comment type="subunit">
    <text evidence="1">Homodimer.</text>
</comment>
<comment type="similarity">
    <text evidence="1">Belongs to the OMP decarboxylase family. Type 1 subfamily.</text>
</comment>
<gene>
    <name evidence="1" type="primary">pyrF</name>
    <name type="ordered locus">BCAN_A2173</name>
</gene>